<gene>
    <name type="primary">INSL3</name>
    <name type="synonym">RLF</name>
</gene>
<feature type="signal peptide" evidence="2">
    <location>
        <begin position="1"/>
        <end position="24"/>
    </location>
</feature>
<feature type="peptide" id="PRO_0000016137" description="Insulin-like 3 B chain">
    <location>
        <begin position="25"/>
        <end position="58"/>
    </location>
</feature>
<feature type="propeptide" id="PRO_0000016138" description="C peptide like">
    <location>
        <begin position="61"/>
        <end position="104"/>
    </location>
</feature>
<feature type="peptide" id="PRO_0000016139" description="Insulin-like 3 A chain">
    <location>
        <begin position="107"/>
        <end position="132"/>
    </location>
</feature>
<feature type="disulfide bond" description="Interchain (between B and A chains)" evidence="1">
    <location>
        <begin position="36"/>
        <end position="117"/>
    </location>
</feature>
<feature type="disulfide bond" description="Interchain (between B and A chains)" evidence="1">
    <location>
        <begin position="48"/>
        <end position="130"/>
    </location>
</feature>
<feature type="disulfide bond" evidence="1">
    <location>
        <begin position="116"/>
        <end position="121"/>
    </location>
</feature>
<accession>Q6X7V3</accession>
<sequence length="132" mass="14148">MSPRPLAWALVLLGAALAVALALGSAPAPGAREKLCGHHFVRALVRVCGGPRWSSEDGRRVAGGDRELLQWLEGRHLHGQVSDGDPMLVLVPQALPQASLHHHHRRAAATNPAHYCCLSGCSRQDLLTLCPH</sequence>
<dbReference type="EMBL" id="AY251013">
    <property type="protein sequence ID" value="AAP79617.1"/>
    <property type="molecule type" value="mRNA"/>
</dbReference>
<dbReference type="RefSeq" id="NP_001002962.1">
    <property type="nucleotide sequence ID" value="NM_001002962.1"/>
</dbReference>
<dbReference type="FunCoup" id="Q6X7V3">
    <property type="interactions" value="16"/>
</dbReference>
<dbReference type="PaxDb" id="9612-ENSCAFP00000041498"/>
<dbReference type="Ensembl" id="ENSCAFT00030034066.1">
    <property type="protein sequence ID" value="ENSCAFP00030029703.1"/>
    <property type="gene ID" value="ENSCAFG00030018483.1"/>
</dbReference>
<dbReference type="GeneID" id="403436"/>
<dbReference type="KEGG" id="cfa:403436"/>
<dbReference type="CTD" id="3640"/>
<dbReference type="eggNOG" id="ENOG502TFQI">
    <property type="taxonomic scope" value="Eukaryota"/>
</dbReference>
<dbReference type="InParanoid" id="Q6X7V3"/>
<dbReference type="OrthoDB" id="26214at33554"/>
<dbReference type="Reactome" id="R-CFA-444821">
    <property type="pathway name" value="Relaxin receptors"/>
</dbReference>
<dbReference type="Proteomes" id="UP000002254">
    <property type="component" value="Unplaced"/>
</dbReference>
<dbReference type="Proteomes" id="UP000694429">
    <property type="component" value="Chromosome 20"/>
</dbReference>
<dbReference type="Proteomes" id="UP000694542">
    <property type="component" value="Unplaced"/>
</dbReference>
<dbReference type="Proteomes" id="UP000805418">
    <property type="component" value="Unplaced"/>
</dbReference>
<dbReference type="GO" id="GO:0005615">
    <property type="term" value="C:extracellular space"/>
    <property type="evidence" value="ECO:0000318"/>
    <property type="project" value="GO_Central"/>
</dbReference>
<dbReference type="GO" id="GO:0005179">
    <property type="term" value="F:hormone activity"/>
    <property type="evidence" value="ECO:0007669"/>
    <property type="project" value="UniProtKB-KW"/>
</dbReference>
<dbReference type="GO" id="GO:0007193">
    <property type="term" value="P:adenylate cyclase-inhibiting G protein-coupled receptor signaling pathway"/>
    <property type="evidence" value="ECO:0000318"/>
    <property type="project" value="GO_Central"/>
</dbReference>
<dbReference type="CDD" id="cd04365">
    <property type="entry name" value="IlGF_relaxin_like"/>
    <property type="match status" value="1"/>
</dbReference>
<dbReference type="Gene3D" id="1.10.100.10">
    <property type="entry name" value="Insulin-like"/>
    <property type="match status" value="1"/>
</dbReference>
<dbReference type="InterPro" id="IPR043387">
    <property type="entry name" value="INSL3/INSL4"/>
</dbReference>
<dbReference type="InterPro" id="IPR016179">
    <property type="entry name" value="Insulin-like"/>
</dbReference>
<dbReference type="InterPro" id="IPR036438">
    <property type="entry name" value="Insulin-like_sf"/>
</dbReference>
<dbReference type="InterPro" id="IPR022353">
    <property type="entry name" value="Insulin_CS"/>
</dbReference>
<dbReference type="PANTHER" id="PTHR10423">
    <property type="entry name" value="INSULIN-LIKE 3"/>
    <property type="match status" value="1"/>
</dbReference>
<dbReference type="PANTHER" id="PTHR10423:SF3">
    <property type="entry name" value="INSULIN-LIKE 3"/>
    <property type="match status" value="1"/>
</dbReference>
<dbReference type="Pfam" id="PF00049">
    <property type="entry name" value="Insulin"/>
    <property type="match status" value="1"/>
</dbReference>
<dbReference type="SMART" id="SM00078">
    <property type="entry name" value="IlGF"/>
    <property type="match status" value="1"/>
</dbReference>
<dbReference type="SUPFAM" id="SSF56994">
    <property type="entry name" value="Insulin-like"/>
    <property type="match status" value="1"/>
</dbReference>
<dbReference type="PROSITE" id="PS00262">
    <property type="entry name" value="INSULIN"/>
    <property type="match status" value="1"/>
</dbReference>
<comment type="function">
    <text evidence="1">Seems to play a role in testicular function. May be a trophic hormone with a role in testicular descent in fetal life. Is a ligand for LGR8 receptor (By similarity).</text>
</comment>
<comment type="subunit">
    <text evidence="1">Heterodimer of a B chain and an A chain linked by two disulfide bonds.</text>
</comment>
<comment type="subcellular location">
    <subcellularLocation>
        <location>Secreted</location>
    </subcellularLocation>
</comment>
<comment type="tissue specificity">
    <text evidence="3">More strongly expressed in testis than in ovary.</text>
</comment>
<comment type="similarity">
    <text evidence="4">Belongs to the insulin family.</text>
</comment>
<protein>
    <recommendedName>
        <fullName>Insulin-like 3</fullName>
    </recommendedName>
    <alternativeName>
        <fullName>Leydig insulin-like peptide</fullName>
        <shortName>Ley-I-L</shortName>
    </alternativeName>
    <alternativeName>
        <fullName>Relaxin-like factor</fullName>
    </alternativeName>
    <component>
        <recommendedName>
            <fullName>Insulin-like 3 B chain</fullName>
        </recommendedName>
    </component>
    <component>
        <recommendedName>
            <fullName>Insulin-like 3 A chain</fullName>
        </recommendedName>
    </component>
</protein>
<organism>
    <name type="scientific">Canis lupus familiaris</name>
    <name type="common">Dog</name>
    <name type="synonym">Canis familiaris</name>
    <dbReference type="NCBI Taxonomy" id="9615"/>
    <lineage>
        <taxon>Eukaryota</taxon>
        <taxon>Metazoa</taxon>
        <taxon>Chordata</taxon>
        <taxon>Craniata</taxon>
        <taxon>Vertebrata</taxon>
        <taxon>Euteleostomi</taxon>
        <taxon>Mammalia</taxon>
        <taxon>Eutheria</taxon>
        <taxon>Laurasiatheria</taxon>
        <taxon>Carnivora</taxon>
        <taxon>Caniformia</taxon>
        <taxon>Canidae</taxon>
        <taxon>Canis</taxon>
    </lineage>
</organism>
<keyword id="KW-0165">Cleavage on pair of basic residues</keyword>
<keyword id="KW-1015">Disulfide bond</keyword>
<keyword id="KW-0372">Hormone</keyword>
<keyword id="KW-1185">Reference proteome</keyword>
<keyword id="KW-0964">Secreted</keyword>
<keyword id="KW-0732">Signal</keyword>
<evidence type="ECO:0000250" key="1"/>
<evidence type="ECO:0000255" key="2"/>
<evidence type="ECO:0000269" key="3">
    <source>
    </source>
</evidence>
<evidence type="ECO:0000305" key="4"/>
<proteinExistence type="evidence at transcript level"/>
<reference key="1">
    <citation type="journal article" date="2003" name="Biol. Reprod.">
        <title>Isolation and expression analysis of the canine insulin-like factor 3 gene.</title>
        <authorList>
            <person name="Truong A."/>
            <person name="Bogatcheva N.V."/>
            <person name="Schelling C."/>
            <person name="Dolf G."/>
            <person name="Agoulnik A.I."/>
        </authorList>
    </citation>
    <scope>NUCLEOTIDE SEQUENCE [MRNA]</scope>
    <scope>TISSUE SPECIFICITY</scope>
</reference>
<name>INSL3_CANLF</name>